<proteinExistence type="inferred from homology"/>
<sequence length="251" mass="28837">MILYEYPFNERIRTLLRLEDLFERFAFFLAQEDPREHHVALTTLFEIAEVTGRADLKSDLMKELERQRQTLAPFRGNPGIEQNALEAVLGEIEQTLANLAQMQGKTGQHLVDNEWLASIRSRAVIPGGTCKFDLPSYYAWQQWPAEQRRQDIAKWVAPLLPLRDAAAIVLRLARESGQASKVMAMQGSYQQMLSGRTYQLMQVRVPPELHVIPEASANKYMLWVRFTMQDGDVRPRAVDIDVPFHLTLCNL</sequence>
<reference key="1">
    <citation type="submission" date="2007-03" db="EMBL/GenBank/DDBJ databases">
        <title>Complete sequence of chromosome 1 of Burkholderia vietnamiensis G4.</title>
        <authorList>
            <consortium name="US DOE Joint Genome Institute"/>
            <person name="Copeland A."/>
            <person name="Lucas S."/>
            <person name="Lapidus A."/>
            <person name="Barry K."/>
            <person name="Detter J.C."/>
            <person name="Glavina del Rio T."/>
            <person name="Hammon N."/>
            <person name="Israni S."/>
            <person name="Dalin E."/>
            <person name="Tice H."/>
            <person name="Pitluck S."/>
            <person name="Chain P."/>
            <person name="Malfatti S."/>
            <person name="Shin M."/>
            <person name="Vergez L."/>
            <person name="Schmutz J."/>
            <person name="Larimer F."/>
            <person name="Land M."/>
            <person name="Hauser L."/>
            <person name="Kyrpides N."/>
            <person name="Tiedje J."/>
            <person name="Richardson P."/>
        </authorList>
    </citation>
    <scope>NUCLEOTIDE SEQUENCE [LARGE SCALE GENOMIC DNA]</scope>
    <source>
        <strain>G4 / LMG 22486</strain>
    </source>
</reference>
<feature type="chain" id="PRO_1000064902" description="Cell division protein ZapD">
    <location>
        <begin position="1"/>
        <end position="251"/>
    </location>
</feature>
<keyword id="KW-0131">Cell cycle</keyword>
<keyword id="KW-0132">Cell division</keyword>
<keyword id="KW-0963">Cytoplasm</keyword>
<keyword id="KW-0717">Septation</keyword>
<organism>
    <name type="scientific">Burkholderia vietnamiensis (strain G4 / LMG 22486)</name>
    <name type="common">Burkholderia cepacia (strain R1808)</name>
    <dbReference type="NCBI Taxonomy" id="269482"/>
    <lineage>
        <taxon>Bacteria</taxon>
        <taxon>Pseudomonadati</taxon>
        <taxon>Pseudomonadota</taxon>
        <taxon>Betaproteobacteria</taxon>
        <taxon>Burkholderiales</taxon>
        <taxon>Burkholderiaceae</taxon>
        <taxon>Burkholderia</taxon>
        <taxon>Burkholderia cepacia complex</taxon>
    </lineage>
</organism>
<protein>
    <recommendedName>
        <fullName evidence="1">Cell division protein ZapD</fullName>
    </recommendedName>
    <alternativeName>
        <fullName evidence="1">Z ring-associated protein D</fullName>
    </alternativeName>
</protein>
<evidence type="ECO:0000255" key="1">
    <source>
        <dbReference type="HAMAP-Rule" id="MF_01092"/>
    </source>
</evidence>
<gene>
    <name evidence="1" type="primary">zapD</name>
    <name type="ordered locus">Bcep1808_0549</name>
</gene>
<accession>A4JBA8</accession>
<comment type="function">
    <text evidence="1">Cell division factor that enhances FtsZ-ring assembly. Directly interacts with FtsZ and promotes bundling of FtsZ protofilaments, with a reduction in FtsZ GTPase activity.</text>
</comment>
<comment type="subunit">
    <text evidence="1">Interacts with FtsZ.</text>
</comment>
<comment type="subcellular location">
    <subcellularLocation>
        <location evidence="1">Cytoplasm</location>
    </subcellularLocation>
    <text evidence="1">Localizes to mid-cell in an FtsZ-dependent manner.</text>
</comment>
<comment type="similarity">
    <text evidence="1">Belongs to the ZapD family.</text>
</comment>
<dbReference type="EMBL" id="CP000614">
    <property type="protein sequence ID" value="ABO53561.1"/>
    <property type="molecule type" value="Genomic_DNA"/>
</dbReference>
<dbReference type="SMR" id="A4JBA8"/>
<dbReference type="KEGG" id="bvi:Bcep1808_0549"/>
<dbReference type="eggNOG" id="COG4582">
    <property type="taxonomic scope" value="Bacteria"/>
</dbReference>
<dbReference type="HOGENOM" id="CLU_076303_0_1_4"/>
<dbReference type="Proteomes" id="UP000002287">
    <property type="component" value="Chromosome 1"/>
</dbReference>
<dbReference type="GO" id="GO:0032153">
    <property type="term" value="C:cell division site"/>
    <property type="evidence" value="ECO:0007669"/>
    <property type="project" value="TreeGrafter"/>
</dbReference>
<dbReference type="GO" id="GO:0005737">
    <property type="term" value="C:cytoplasm"/>
    <property type="evidence" value="ECO:0007669"/>
    <property type="project" value="UniProtKB-SubCell"/>
</dbReference>
<dbReference type="GO" id="GO:0000917">
    <property type="term" value="P:division septum assembly"/>
    <property type="evidence" value="ECO:0007669"/>
    <property type="project" value="UniProtKB-KW"/>
</dbReference>
<dbReference type="GO" id="GO:0043093">
    <property type="term" value="P:FtsZ-dependent cytokinesis"/>
    <property type="evidence" value="ECO:0007669"/>
    <property type="project" value="UniProtKB-UniRule"/>
</dbReference>
<dbReference type="Gene3D" id="1.10.3900.10">
    <property type="entry name" value="YacF-like"/>
    <property type="match status" value="1"/>
</dbReference>
<dbReference type="Gene3D" id="2.60.440.10">
    <property type="entry name" value="YacF-like domains"/>
    <property type="match status" value="1"/>
</dbReference>
<dbReference type="HAMAP" id="MF_01092">
    <property type="entry name" value="ZapD"/>
    <property type="match status" value="1"/>
</dbReference>
<dbReference type="InterPro" id="IPR009777">
    <property type="entry name" value="ZapD"/>
</dbReference>
<dbReference type="InterPro" id="IPR027462">
    <property type="entry name" value="ZapD_C"/>
</dbReference>
<dbReference type="InterPro" id="IPR036268">
    <property type="entry name" value="ZapD_sf"/>
</dbReference>
<dbReference type="NCBIfam" id="NF003656">
    <property type="entry name" value="PRK05287.1-4"/>
    <property type="match status" value="1"/>
</dbReference>
<dbReference type="PANTHER" id="PTHR39455">
    <property type="entry name" value="CELL DIVISION PROTEIN ZAPD"/>
    <property type="match status" value="1"/>
</dbReference>
<dbReference type="PANTHER" id="PTHR39455:SF1">
    <property type="entry name" value="CELL DIVISION PROTEIN ZAPD"/>
    <property type="match status" value="1"/>
</dbReference>
<dbReference type="Pfam" id="PF07072">
    <property type="entry name" value="ZapD"/>
    <property type="match status" value="1"/>
</dbReference>
<dbReference type="SUPFAM" id="SSF160950">
    <property type="entry name" value="YacF-like"/>
    <property type="match status" value="1"/>
</dbReference>
<name>ZAPD_BURVG</name>